<reference key="1">
    <citation type="submission" date="2008-05" db="EMBL/GenBank/DDBJ databases">
        <title>Complete sequence of Rhodopseudomonas palustris TIE-1.</title>
        <authorList>
            <consortium name="US DOE Joint Genome Institute"/>
            <person name="Lucas S."/>
            <person name="Copeland A."/>
            <person name="Lapidus A."/>
            <person name="Glavina del Rio T."/>
            <person name="Dalin E."/>
            <person name="Tice H."/>
            <person name="Pitluck S."/>
            <person name="Chain P."/>
            <person name="Malfatti S."/>
            <person name="Shin M."/>
            <person name="Vergez L."/>
            <person name="Lang D."/>
            <person name="Schmutz J."/>
            <person name="Larimer F."/>
            <person name="Land M."/>
            <person name="Hauser L."/>
            <person name="Kyrpides N."/>
            <person name="Mikhailova N."/>
            <person name="Emerson D."/>
            <person name="Newman D.K."/>
            <person name="Roden E."/>
            <person name="Richardson P."/>
        </authorList>
    </citation>
    <scope>NUCLEOTIDE SEQUENCE [LARGE SCALE GENOMIC DNA]</scope>
    <source>
        <strain>TIE-1</strain>
    </source>
</reference>
<keyword id="KW-0031">Aminopeptidase</keyword>
<keyword id="KW-0963">Cytoplasm</keyword>
<keyword id="KW-0378">Hydrolase</keyword>
<keyword id="KW-0464">Manganese</keyword>
<keyword id="KW-0479">Metal-binding</keyword>
<keyword id="KW-0645">Protease</keyword>
<evidence type="ECO:0000255" key="1">
    <source>
        <dbReference type="HAMAP-Rule" id="MF_00181"/>
    </source>
</evidence>
<organism>
    <name type="scientific">Rhodopseudomonas palustris (strain TIE-1)</name>
    <dbReference type="NCBI Taxonomy" id="395960"/>
    <lineage>
        <taxon>Bacteria</taxon>
        <taxon>Pseudomonadati</taxon>
        <taxon>Pseudomonadota</taxon>
        <taxon>Alphaproteobacteria</taxon>
        <taxon>Hyphomicrobiales</taxon>
        <taxon>Nitrobacteraceae</taxon>
        <taxon>Rhodopseudomonas</taxon>
    </lineage>
</organism>
<protein>
    <recommendedName>
        <fullName evidence="1">Probable cytosol aminopeptidase</fullName>
        <ecNumber evidence="1">3.4.11.1</ecNumber>
    </recommendedName>
    <alternativeName>
        <fullName evidence="1">Leucine aminopeptidase</fullName>
        <shortName evidence="1">LAP</shortName>
        <ecNumber evidence="1">3.4.11.10</ecNumber>
    </alternativeName>
    <alternativeName>
        <fullName evidence="1">Leucyl aminopeptidase</fullName>
    </alternativeName>
</protein>
<feature type="chain" id="PRO_1000098341" description="Probable cytosol aminopeptidase">
    <location>
        <begin position="1"/>
        <end position="500"/>
    </location>
</feature>
<feature type="active site" evidence="1">
    <location>
        <position position="276"/>
    </location>
</feature>
<feature type="active site" evidence="1">
    <location>
        <position position="350"/>
    </location>
</feature>
<feature type="binding site" evidence="1">
    <location>
        <position position="264"/>
    </location>
    <ligand>
        <name>Mn(2+)</name>
        <dbReference type="ChEBI" id="CHEBI:29035"/>
        <label>2</label>
    </ligand>
</feature>
<feature type="binding site" evidence="1">
    <location>
        <position position="269"/>
    </location>
    <ligand>
        <name>Mn(2+)</name>
        <dbReference type="ChEBI" id="CHEBI:29035"/>
        <label>1</label>
    </ligand>
</feature>
<feature type="binding site" evidence="1">
    <location>
        <position position="269"/>
    </location>
    <ligand>
        <name>Mn(2+)</name>
        <dbReference type="ChEBI" id="CHEBI:29035"/>
        <label>2</label>
    </ligand>
</feature>
<feature type="binding site" evidence="1">
    <location>
        <position position="287"/>
    </location>
    <ligand>
        <name>Mn(2+)</name>
        <dbReference type="ChEBI" id="CHEBI:29035"/>
        <label>2</label>
    </ligand>
</feature>
<feature type="binding site" evidence="1">
    <location>
        <position position="346"/>
    </location>
    <ligand>
        <name>Mn(2+)</name>
        <dbReference type="ChEBI" id="CHEBI:29035"/>
        <label>1</label>
    </ligand>
</feature>
<feature type="binding site" evidence="1">
    <location>
        <position position="348"/>
    </location>
    <ligand>
        <name>Mn(2+)</name>
        <dbReference type="ChEBI" id="CHEBI:29035"/>
        <label>1</label>
    </ligand>
</feature>
<feature type="binding site" evidence="1">
    <location>
        <position position="348"/>
    </location>
    <ligand>
        <name>Mn(2+)</name>
        <dbReference type="ChEBI" id="CHEBI:29035"/>
        <label>2</label>
    </ligand>
</feature>
<accession>B3Q9R8</accession>
<comment type="function">
    <text evidence="1">Presumably involved in the processing and regular turnover of intracellular proteins. Catalyzes the removal of unsubstituted N-terminal amino acids from various peptides.</text>
</comment>
<comment type="catalytic activity">
    <reaction evidence="1">
        <text>Release of an N-terminal amino acid, Xaa-|-Yaa-, in which Xaa is preferably Leu, but may be other amino acids including Pro although not Arg or Lys, and Yaa may be Pro. Amino acid amides and methyl esters are also readily hydrolyzed, but rates on arylamides are exceedingly low.</text>
        <dbReference type="EC" id="3.4.11.1"/>
    </reaction>
</comment>
<comment type="catalytic activity">
    <reaction evidence="1">
        <text>Release of an N-terminal amino acid, preferentially leucine, but not glutamic or aspartic acids.</text>
        <dbReference type="EC" id="3.4.11.10"/>
    </reaction>
</comment>
<comment type="cofactor">
    <cofactor evidence="1">
        <name>Mn(2+)</name>
        <dbReference type="ChEBI" id="CHEBI:29035"/>
    </cofactor>
    <text evidence="1">Binds 2 manganese ions per subunit.</text>
</comment>
<comment type="subcellular location">
    <subcellularLocation>
        <location evidence="1">Cytoplasm</location>
    </subcellularLocation>
</comment>
<comment type="similarity">
    <text evidence="1">Belongs to the peptidase M17 family.</text>
</comment>
<name>AMPA_RHOPT</name>
<gene>
    <name evidence="1" type="primary">pepA</name>
    <name type="ordered locus">Rpal_3470</name>
</gene>
<proteinExistence type="inferred from homology"/>
<dbReference type="EC" id="3.4.11.1" evidence="1"/>
<dbReference type="EC" id="3.4.11.10" evidence="1"/>
<dbReference type="EMBL" id="CP001096">
    <property type="protein sequence ID" value="ACF01971.1"/>
    <property type="molecule type" value="Genomic_DNA"/>
</dbReference>
<dbReference type="RefSeq" id="WP_012496519.1">
    <property type="nucleotide sequence ID" value="NC_011004.1"/>
</dbReference>
<dbReference type="SMR" id="B3Q9R8"/>
<dbReference type="KEGG" id="rpt:Rpal_3470"/>
<dbReference type="HOGENOM" id="CLU_013734_6_0_5"/>
<dbReference type="OrthoDB" id="9809354at2"/>
<dbReference type="Proteomes" id="UP000001725">
    <property type="component" value="Chromosome"/>
</dbReference>
<dbReference type="GO" id="GO:0005737">
    <property type="term" value="C:cytoplasm"/>
    <property type="evidence" value="ECO:0007669"/>
    <property type="project" value="UniProtKB-SubCell"/>
</dbReference>
<dbReference type="GO" id="GO:0030145">
    <property type="term" value="F:manganese ion binding"/>
    <property type="evidence" value="ECO:0007669"/>
    <property type="project" value="UniProtKB-UniRule"/>
</dbReference>
<dbReference type="GO" id="GO:0070006">
    <property type="term" value="F:metalloaminopeptidase activity"/>
    <property type="evidence" value="ECO:0007669"/>
    <property type="project" value="InterPro"/>
</dbReference>
<dbReference type="GO" id="GO:0006508">
    <property type="term" value="P:proteolysis"/>
    <property type="evidence" value="ECO:0007669"/>
    <property type="project" value="UniProtKB-KW"/>
</dbReference>
<dbReference type="CDD" id="cd00433">
    <property type="entry name" value="Peptidase_M17"/>
    <property type="match status" value="1"/>
</dbReference>
<dbReference type="Gene3D" id="3.40.220.10">
    <property type="entry name" value="Leucine Aminopeptidase, subunit E, domain 1"/>
    <property type="match status" value="1"/>
</dbReference>
<dbReference type="Gene3D" id="3.40.630.10">
    <property type="entry name" value="Zn peptidases"/>
    <property type="match status" value="1"/>
</dbReference>
<dbReference type="HAMAP" id="MF_00181">
    <property type="entry name" value="Cytosol_peptidase_M17"/>
    <property type="match status" value="1"/>
</dbReference>
<dbReference type="InterPro" id="IPR011356">
    <property type="entry name" value="Leucine_aapep/pepB"/>
</dbReference>
<dbReference type="InterPro" id="IPR043472">
    <property type="entry name" value="Macro_dom-like"/>
</dbReference>
<dbReference type="InterPro" id="IPR000819">
    <property type="entry name" value="Peptidase_M17_C"/>
</dbReference>
<dbReference type="InterPro" id="IPR023042">
    <property type="entry name" value="Peptidase_M17_leu_NH2_pept"/>
</dbReference>
<dbReference type="InterPro" id="IPR008283">
    <property type="entry name" value="Peptidase_M17_N"/>
</dbReference>
<dbReference type="NCBIfam" id="NF002073">
    <property type="entry name" value="PRK00913.1-2"/>
    <property type="match status" value="1"/>
</dbReference>
<dbReference type="NCBIfam" id="NF002074">
    <property type="entry name" value="PRK00913.1-4"/>
    <property type="match status" value="1"/>
</dbReference>
<dbReference type="NCBIfam" id="NF002075">
    <property type="entry name" value="PRK00913.2-2"/>
    <property type="match status" value="1"/>
</dbReference>
<dbReference type="NCBIfam" id="NF002077">
    <property type="entry name" value="PRK00913.2-4"/>
    <property type="match status" value="1"/>
</dbReference>
<dbReference type="NCBIfam" id="NF002083">
    <property type="entry name" value="PRK00913.3-5"/>
    <property type="match status" value="1"/>
</dbReference>
<dbReference type="PANTHER" id="PTHR11963:SF23">
    <property type="entry name" value="CYTOSOL AMINOPEPTIDASE"/>
    <property type="match status" value="1"/>
</dbReference>
<dbReference type="PANTHER" id="PTHR11963">
    <property type="entry name" value="LEUCINE AMINOPEPTIDASE-RELATED"/>
    <property type="match status" value="1"/>
</dbReference>
<dbReference type="Pfam" id="PF00883">
    <property type="entry name" value="Peptidase_M17"/>
    <property type="match status" value="1"/>
</dbReference>
<dbReference type="Pfam" id="PF02789">
    <property type="entry name" value="Peptidase_M17_N"/>
    <property type="match status" value="1"/>
</dbReference>
<dbReference type="PRINTS" id="PR00481">
    <property type="entry name" value="LAMNOPPTDASE"/>
</dbReference>
<dbReference type="SUPFAM" id="SSF52949">
    <property type="entry name" value="Macro domain-like"/>
    <property type="match status" value="1"/>
</dbReference>
<dbReference type="SUPFAM" id="SSF53187">
    <property type="entry name" value="Zn-dependent exopeptidases"/>
    <property type="match status" value="1"/>
</dbReference>
<dbReference type="PROSITE" id="PS00631">
    <property type="entry name" value="CYTOSOL_AP"/>
    <property type="match status" value="1"/>
</dbReference>
<sequence length="500" mass="52319">MPDAVKVGFVPFATPARGTLIVFCDDGLKFGATATKALGAAVATVKRAAATAQFKGKSGSAMDLLAPEGLKVGRLIVVGAGKVASINDYDLLKLGGAVAGKIGAGDTAVTVVADLPTGAMKPEQAAAIASGIRLRAYKFDRYKTKKKDDENGAANASVTLAVADPAAAKKAFTPDSHVVDGVILARELVNEPPNVLYPEEFAKRAAQLKKLGVEVQILDVKAMTQLKMGALLGVSQGSAHPGRTVIMRWNGGKKGEQPLAFVGKGVCFDTGGISIKPSASMEDMKGDMGGAACVVGLMHALAARKAKVNAVGAIGLVENMPDGNAQRPGDIVTSMSGQTIEIINTDAEGRLVLADVLWYVAQKHKPKFMVDLATLTGAIMVALGTEYAGLFSNNDQLAERLAAVGQSTGEKVWRMPLGPEYDKQIDSQFADMKNTGSRNGGSITAAQFLQRFVDGTPWAHLDIAGTAMASPKNEINQSWGSGYGVRLLNQLVAEYYEAKK</sequence>